<name>HSLO_BREBN</name>
<sequence>MGDYMIRATGFNGHVRAFAARTTESVEDMRRRHDMWNTATAAAGRTLTITLMMGAMLKGNESLHVKVKGGGPIGQIMAEANAHGEGIAYVSNPHVHFELNDKGKLDVARAVGTDGFVYVTKDLGLKEPYQGSAPIVSGEIGEDFTYYFVMSEQTPSAVGVGVLVNPEDRSVLAAGGFILQLLPNTPEEVVAAIEERLGQLPQVSRMIGEGLTPEEILDRVLDEPKILSHTEIQFSCKCSADKVVQALISMGREEMEGLIEEQGEAEVHCHFCNERYHYDRSALEDILKDM</sequence>
<organism>
    <name type="scientific">Brevibacillus brevis (strain 47 / JCM 6285 / NBRC 100599)</name>
    <dbReference type="NCBI Taxonomy" id="358681"/>
    <lineage>
        <taxon>Bacteria</taxon>
        <taxon>Bacillati</taxon>
        <taxon>Bacillota</taxon>
        <taxon>Bacilli</taxon>
        <taxon>Bacillales</taxon>
        <taxon>Paenibacillaceae</taxon>
        <taxon>Brevibacillus</taxon>
    </lineage>
</organism>
<accession>C0ZIC7</accession>
<feature type="chain" id="PRO_1000119253" description="33 kDa chaperonin">
    <location>
        <begin position="1"/>
        <end position="290"/>
    </location>
</feature>
<feature type="disulfide bond" description="Redox-active" evidence="1">
    <location>
        <begin position="236"/>
        <end position="238"/>
    </location>
</feature>
<feature type="disulfide bond" description="Redox-active" evidence="1">
    <location>
        <begin position="269"/>
        <end position="272"/>
    </location>
</feature>
<comment type="function">
    <text evidence="1">Redox regulated molecular chaperone. Protects both thermally unfolding and oxidatively damaged proteins from irreversible aggregation. Plays an important role in the bacterial defense system toward oxidative stress.</text>
</comment>
<comment type="subcellular location">
    <subcellularLocation>
        <location evidence="1">Cytoplasm</location>
    </subcellularLocation>
</comment>
<comment type="PTM">
    <text evidence="1">Under oxidizing conditions two disulfide bonds are formed involving the reactive cysteines. Under reducing conditions zinc is bound to the reactive cysteines and the protein is inactive.</text>
</comment>
<comment type="similarity">
    <text evidence="1">Belongs to the HSP33 family.</text>
</comment>
<keyword id="KW-0143">Chaperone</keyword>
<keyword id="KW-0963">Cytoplasm</keyword>
<keyword id="KW-1015">Disulfide bond</keyword>
<keyword id="KW-0676">Redox-active center</keyword>
<keyword id="KW-1185">Reference proteome</keyword>
<keyword id="KW-0862">Zinc</keyword>
<proteinExistence type="inferred from homology"/>
<dbReference type="EMBL" id="AP008955">
    <property type="protein sequence ID" value="BAH41145.1"/>
    <property type="molecule type" value="Genomic_DNA"/>
</dbReference>
<dbReference type="RefSeq" id="WP_012683938.1">
    <property type="nucleotide sequence ID" value="NC_012491.1"/>
</dbReference>
<dbReference type="SMR" id="C0ZIC7"/>
<dbReference type="STRING" id="358681.BBR47_01680"/>
<dbReference type="KEGG" id="bbe:BBR47_01680"/>
<dbReference type="eggNOG" id="COG1281">
    <property type="taxonomic scope" value="Bacteria"/>
</dbReference>
<dbReference type="HOGENOM" id="CLU_054493_1_0_9"/>
<dbReference type="Proteomes" id="UP000001877">
    <property type="component" value="Chromosome"/>
</dbReference>
<dbReference type="GO" id="GO:0005737">
    <property type="term" value="C:cytoplasm"/>
    <property type="evidence" value="ECO:0007669"/>
    <property type="project" value="UniProtKB-SubCell"/>
</dbReference>
<dbReference type="GO" id="GO:0044183">
    <property type="term" value="F:protein folding chaperone"/>
    <property type="evidence" value="ECO:0007669"/>
    <property type="project" value="TreeGrafter"/>
</dbReference>
<dbReference type="GO" id="GO:0051082">
    <property type="term" value="F:unfolded protein binding"/>
    <property type="evidence" value="ECO:0007669"/>
    <property type="project" value="UniProtKB-UniRule"/>
</dbReference>
<dbReference type="GO" id="GO:0042026">
    <property type="term" value="P:protein refolding"/>
    <property type="evidence" value="ECO:0007669"/>
    <property type="project" value="TreeGrafter"/>
</dbReference>
<dbReference type="CDD" id="cd00498">
    <property type="entry name" value="Hsp33"/>
    <property type="match status" value="1"/>
</dbReference>
<dbReference type="Gene3D" id="3.55.30.10">
    <property type="entry name" value="Hsp33 domain"/>
    <property type="match status" value="1"/>
</dbReference>
<dbReference type="Gene3D" id="3.90.1280.10">
    <property type="entry name" value="HSP33 redox switch-like"/>
    <property type="match status" value="1"/>
</dbReference>
<dbReference type="HAMAP" id="MF_00117">
    <property type="entry name" value="HslO"/>
    <property type="match status" value="1"/>
</dbReference>
<dbReference type="InterPro" id="IPR000397">
    <property type="entry name" value="Heat_shock_Hsp33"/>
</dbReference>
<dbReference type="InterPro" id="IPR016154">
    <property type="entry name" value="Heat_shock_Hsp33_C"/>
</dbReference>
<dbReference type="InterPro" id="IPR016153">
    <property type="entry name" value="Heat_shock_Hsp33_N"/>
</dbReference>
<dbReference type="NCBIfam" id="NF001033">
    <property type="entry name" value="PRK00114.1"/>
    <property type="match status" value="1"/>
</dbReference>
<dbReference type="PANTHER" id="PTHR30111">
    <property type="entry name" value="33 KDA CHAPERONIN"/>
    <property type="match status" value="1"/>
</dbReference>
<dbReference type="PANTHER" id="PTHR30111:SF1">
    <property type="entry name" value="33 KDA CHAPERONIN"/>
    <property type="match status" value="1"/>
</dbReference>
<dbReference type="Pfam" id="PF01430">
    <property type="entry name" value="HSP33"/>
    <property type="match status" value="1"/>
</dbReference>
<dbReference type="PIRSF" id="PIRSF005261">
    <property type="entry name" value="Heat_shock_Hsp33"/>
    <property type="match status" value="1"/>
</dbReference>
<dbReference type="SUPFAM" id="SSF64397">
    <property type="entry name" value="Hsp33 domain"/>
    <property type="match status" value="1"/>
</dbReference>
<dbReference type="SUPFAM" id="SSF118352">
    <property type="entry name" value="HSP33 redox switch-like"/>
    <property type="match status" value="1"/>
</dbReference>
<reference key="1">
    <citation type="submission" date="2005-03" db="EMBL/GenBank/DDBJ databases">
        <title>Brevibacillus brevis strain 47, complete genome.</title>
        <authorList>
            <person name="Hosoyama A."/>
            <person name="Yamada R."/>
            <person name="Hongo Y."/>
            <person name="Terui Y."/>
            <person name="Ankai A."/>
            <person name="Masuyama W."/>
            <person name="Sekiguchi M."/>
            <person name="Takeda T."/>
            <person name="Asano K."/>
            <person name="Ohji S."/>
            <person name="Ichikawa N."/>
            <person name="Narita S."/>
            <person name="Aoki N."/>
            <person name="Miura H."/>
            <person name="Matsushita S."/>
            <person name="Sekigawa T."/>
            <person name="Yamagata H."/>
            <person name="Yoshikawa H."/>
            <person name="Udaka S."/>
            <person name="Tanikawa S."/>
            <person name="Fujita N."/>
        </authorList>
    </citation>
    <scope>NUCLEOTIDE SEQUENCE [LARGE SCALE GENOMIC DNA]</scope>
    <source>
        <strain>47 / JCM 6285 / NBRC 100599</strain>
    </source>
</reference>
<gene>
    <name evidence="1" type="primary">hslO</name>
    <name type="ordered locus">BBR47_01680</name>
</gene>
<evidence type="ECO:0000255" key="1">
    <source>
        <dbReference type="HAMAP-Rule" id="MF_00117"/>
    </source>
</evidence>
<protein>
    <recommendedName>
        <fullName evidence="1">33 kDa chaperonin</fullName>
    </recommendedName>
    <alternativeName>
        <fullName evidence="1">Heat shock protein 33 homolog</fullName>
        <shortName evidence="1">HSP33</shortName>
    </alternativeName>
</protein>